<accession>B9MB82</accession>
<name>RS17_ACIET</name>
<proteinExistence type="inferred from homology"/>
<dbReference type="EMBL" id="CP001392">
    <property type="protein sequence ID" value="ACM31766.1"/>
    <property type="molecule type" value="Genomic_DNA"/>
</dbReference>
<dbReference type="RefSeq" id="WP_011803751.1">
    <property type="nucleotide sequence ID" value="NC_011992.1"/>
</dbReference>
<dbReference type="SMR" id="B9MB82"/>
<dbReference type="GeneID" id="84683203"/>
<dbReference type="KEGG" id="dia:Dtpsy_0282"/>
<dbReference type="eggNOG" id="COG0186">
    <property type="taxonomic scope" value="Bacteria"/>
</dbReference>
<dbReference type="HOGENOM" id="CLU_073626_1_1_4"/>
<dbReference type="Proteomes" id="UP000000450">
    <property type="component" value="Chromosome"/>
</dbReference>
<dbReference type="GO" id="GO:0022627">
    <property type="term" value="C:cytosolic small ribosomal subunit"/>
    <property type="evidence" value="ECO:0007669"/>
    <property type="project" value="TreeGrafter"/>
</dbReference>
<dbReference type="GO" id="GO:0019843">
    <property type="term" value="F:rRNA binding"/>
    <property type="evidence" value="ECO:0007669"/>
    <property type="project" value="UniProtKB-UniRule"/>
</dbReference>
<dbReference type="GO" id="GO:0003735">
    <property type="term" value="F:structural constituent of ribosome"/>
    <property type="evidence" value="ECO:0007669"/>
    <property type="project" value="InterPro"/>
</dbReference>
<dbReference type="GO" id="GO:0006412">
    <property type="term" value="P:translation"/>
    <property type="evidence" value="ECO:0007669"/>
    <property type="project" value="UniProtKB-UniRule"/>
</dbReference>
<dbReference type="CDD" id="cd00364">
    <property type="entry name" value="Ribosomal_uS17"/>
    <property type="match status" value="1"/>
</dbReference>
<dbReference type="Gene3D" id="2.40.50.140">
    <property type="entry name" value="Nucleic acid-binding proteins"/>
    <property type="match status" value="1"/>
</dbReference>
<dbReference type="HAMAP" id="MF_01345_B">
    <property type="entry name" value="Ribosomal_uS17_B"/>
    <property type="match status" value="1"/>
</dbReference>
<dbReference type="InterPro" id="IPR012340">
    <property type="entry name" value="NA-bd_OB-fold"/>
</dbReference>
<dbReference type="InterPro" id="IPR000266">
    <property type="entry name" value="Ribosomal_uS17"/>
</dbReference>
<dbReference type="InterPro" id="IPR019984">
    <property type="entry name" value="Ribosomal_uS17_bact/chlr"/>
</dbReference>
<dbReference type="InterPro" id="IPR019979">
    <property type="entry name" value="Ribosomal_uS17_CS"/>
</dbReference>
<dbReference type="NCBIfam" id="NF004123">
    <property type="entry name" value="PRK05610.1"/>
    <property type="match status" value="1"/>
</dbReference>
<dbReference type="NCBIfam" id="TIGR03635">
    <property type="entry name" value="uS17_bact"/>
    <property type="match status" value="1"/>
</dbReference>
<dbReference type="PANTHER" id="PTHR10744">
    <property type="entry name" value="40S RIBOSOMAL PROTEIN S11 FAMILY MEMBER"/>
    <property type="match status" value="1"/>
</dbReference>
<dbReference type="PANTHER" id="PTHR10744:SF1">
    <property type="entry name" value="SMALL RIBOSOMAL SUBUNIT PROTEIN US17M"/>
    <property type="match status" value="1"/>
</dbReference>
<dbReference type="Pfam" id="PF00366">
    <property type="entry name" value="Ribosomal_S17"/>
    <property type="match status" value="1"/>
</dbReference>
<dbReference type="PRINTS" id="PR00973">
    <property type="entry name" value="RIBOSOMALS17"/>
</dbReference>
<dbReference type="SUPFAM" id="SSF50249">
    <property type="entry name" value="Nucleic acid-binding proteins"/>
    <property type="match status" value="1"/>
</dbReference>
<dbReference type="PROSITE" id="PS00056">
    <property type="entry name" value="RIBOSOMAL_S17"/>
    <property type="match status" value="1"/>
</dbReference>
<organism>
    <name type="scientific">Acidovorax ebreus (strain TPSY)</name>
    <name type="common">Diaphorobacter sp. (strain TPSY)</name>
    <dbReference type="NCBI Taxonomy" id="535289"/>
    <lineage>
        <taxon>Bacteria</taxon>
        <taxon>Pseudomonadati</taxon>
        <taxon>Pseudomonadota</taxon>
        <taxon>Betaproteobacteria</taxon>
        <taxon>Burkholderiales</taxon>
        <taxon>Comamonadaceae</taxon>
        <taxon>Diaphorobacter</taxon>
    </lineage>
</organism>
<keyword id="KW-1185">Reference proteome</keyword>
<keyword id="KW-0687">Ribonucleoprotein</keyword>
<keyword id="KW-0689">Ribosomal protein</keyword>
<keyword id="KW-0694">RNA-binding</keyword>
<keyword id="KW-0699">rRNA-binding</keyword>
<comment type="function">
    <text evidence="1">One of the primary rRNA binding proteins, it binds specifically to the 5'-end of 16S ribosomal RNA.</text>
</comment>
<comment type="subunit">
    <text evidence="1">Part of the 30S ribosomal subunit.</text>
</comment>
<comment type="similarity">
    <text evidence="1">Belongs to the universal ribosomal protein uS17 family.</text>
</comment>
<feature type="chain" id="PRO_1000166477" description="Small ribosomal subunit protein uS17">
    <location>
        <begin position="1"/>
        <end position="89"/>
    </location>
</feature>
<protein>
    <recommendedName>
        <fullName evidence="1">Small ribosomal subunit protein uS17</fullName>
    </recommendedName>
    <alternativeName>
        <fullName evidence="2">30S ribosomal protein S17</fullName>
    </alternativeName>
</protein>
<reference key="1">
    <citation type="submission" date="2009-01" db="EMBL/GenBank/DDBJ databases">
        <title>Complete sequence of Diaphorobacter sp. TPSY.</title>
        <authorList>
            <consortium name="US DOE Joint Genome Institute"/>
            <person name="Lucas S."/>
            <person name="Copeland A."/>
            <person name="Lapidus A."/>
            <person name="Glavina del Rio T."/>
            <person name="Tice H."/>
            <person name="Bruce D."/>
            <person name="Goodwin L."/>
            <person name="Pitluck S."/>
            <person name="Chertkov O."/>
            <person name="Brettin T."/>
            <person name="Detter J.C."/>
            <person name="Han C."/>
            <person name="Larimer F."/>
            <person name="Land M."/>
            <person name="Hauser L."/>
            <person name="Kyrpides N."/>
            <person name="Mikhailova N."/>
            <person name="Coates J.D."/>
        </authorList>
    </citation>
    <scope>NUCLEOTIDE SEQUENCE [LARGE SCALE GENOMIC DNA]</scope>
    <source>
        <strain>TPSY</strain>
    </source>
</reference>
<evidence type="ECO:0000255" key="1">
    <source>
        <dbReference type="HAMAP-Rule" id="MF_01345"/>
    </source>
</evidence>
<evidence type="ECO:0000305" key="2"/>
<gene>
    <name evidence="1" type="primary">rpsQ</name>
    <name type="ordered locus">Dtpsy_0282</name>
</gene>
<sequence>MTEAKKSLKRTLVGKVVSDKRAKTVTVLVERRVKHPIYDKIMIKSSKYHAHDENGEYKMGDTIEITESRPLSKTKNWVATRLVQKAGLL</sequence>